<dbReference type="EMBL" id="CP000058">
    <property type="protein sequence ID" value="AAZ36416.1"/>
    <property type="molecule type" value="Genomic_DNA"/>
</dbReference>
<dbReference type="RefSeq" id="WP_002551828.1">
    <property type="nucleotide sequence ID" value="NC_005773.3"/>
</dbReference>
<dbReference type="SMR" id="Q48NZ3"/>
<dbReference type="GeneID" id="93657284"/>
<dbReference type="KEGG" id="psp:PSPPH_0576"/>
<dbReference type="eggNOG" id="COG0360">
    <property type="taxonomic scope" value="Bacteria"/>
</dbReference>
<dbReference type="HOGENOM" id="CLU_113441_6_1_6"/>
<dbReference type="Proteomes" id="UP000000551">
    <property type="component" value="Chromosome"/>
</dbReference>
<dbReference type="GO" id="GO:0022627">
    <property type="term" value="C:cytosolic small ribosomal subunit"/>
    <property type="evidence" value="ECO:0007669"/>
    <property type="project" value="TreeGrafter"/>
</dbReference>
<dbReference type="GO" id="GO:0070181">
    <property type="term" value="F:small ribosomal subunit rRNA binding"/>
    <property type="evidence" value="ECO:0007669"/>
    <property type="project" value="TreeGrafter"/>
</dbReference>
<dbReference type="GO" id="GO:0003735">
    <property type="term" value="F:structural constituent of ribosome"/>
    <property type="evidence" value="ECO:0007669"/>
    <property type="project" value="InterPro"/>
</dbReference>
<dbReference type="GO" id="GO:0006412">
    <property type="term" value="P:translation"/>
    <property type="evidence" value="ECO:0007669"/>
    <property type="project" value="UniProtKB-UniRule"/>
</dbReference>
<dbReference type="CDD" id="cd00473">
    <property type="entry name" value="bS6"/>
    <property type="match status" value="1"/>
</dbReference>
<dbReference type="FunFam" id="3.30.70.60:FF:000003">
    <property type="entry name" value="30S ribosomal protein S6"/>
    <property type="match status" value="1"/>
</dbReference>
<dbReference type="Gene3D" id="3.30.70.60">
    <property type="match status" value="1"/>
</dbReference>
<dbReference type="HAMAP" id="MF_00360">
    <property type="entry name" value="Ribosomal_bS6"/>
    <property type="match status" value="1"/>
</dbReference>
<dbReference type="InterPro" id="IPR000529">
    <property type="entry name" value="Ribosomal_bS6"/>
</dbReference>
<dbReference type="InterPro" id="IPR020815">
    <property type="entry name" value="Ribosomal_bS6_CS"/>
</dbReference>
<dbReference type="InterPro" id="IPR035980">
    <property type="entry name" value="Ribosomal_bS6_sf"/>
</dbReference>
<dbReference type="InterPro" id="IPR020814">
    <property type="entry name" value="Ribosomal_S6_plastid/chlpt"/>
</dbReference>
<dbReference type="InterPro" id="IPR014717">
    <property type="entry name" value="Transl_elong_EF1B/ribsomal_bS6"/>
</dbReference>
<dbReference type="NCBIfam" id="TIGR00166">
    <property type="entry name" value="S6"/>
    <property type="match status" value="1"/>
</dbReference>
<dbReference type="PANTHER" id="PTHR21011">
    <property type="entry name" value="MITOCHONDRIAL 28S RIBOSOMAL PROTEIN S6"/>
    <property type="match status" value="1"/>
</dbReference>
<dbReference type="PANTHER" id="PTHR21011:SF1">
    <property type="entry name" value="SMALL RIBOSOMAL SUBUNIT PROTEIN BS6M"/>
    <property type="match status" value="1"/>
</dbReference>
<dbReference type="Pfam" id="PF01250">
    <property type="entry name" value="Ribosomal_S6"/>
    <property type="match status" value="1"/>
</dbReference>
<dbReference type="SUPFAM" id="SSF54995">
    <property type="entry name" value="Ribosomal protein S6"/>
    <property type="match status" value="1"/>
</dbReference>
<dbReference type="PROSITE" id="PS01048">
    <property type="entry name" value="RIBOSOMAL_S6"/>
    <property type="match status" value="1"/>
</dbReference>
<comment type="function">
    <text evidence="1">Binds together with bS18 to 16S ribosomal RNA.</text>
</comment>
<comment type="similarity">
    <text evidence="1">Belongs to the bacterial ribosomal protein bS6 family.</text>
</comment>
<name>RS6_PSE14</name>
<evidence type="ECO:0000255" key="1">
    <source>
        <dbReference type="HAMAP-Rule" id="MF_00360"/>
    </source>
</evidence>
<evidence type="ECO:0000256" key="2">
    <source>
        <dbReference type="SAM" id="MobiDB-lite"/>
    </source>
</evidence>
<evidence type="ECO:0000305" key="3"/>
<feature type="chain" id="PRO_0000229567" description="Small ribosomal subunit protein bS6">
    <location>
        <begin position="1"/>
        <end position="141"/>
    </location>
</feature>
<feature type="region of interest" description="Disordered" evidence="2">
    <location>
        <begin position="97"/>
        <end position="141"/>
    </location>
</feature>
<feature type="compositionally biased region" description="Basic and acidic residues" evidence="2">
    <location>
        <begin position="103"/>
        <end position="124"/>
    </location>
</feature>
<feature type="compositionally biased region" description="Acidic residues" evidence="2">
    <location>
        <begin position="125"/>
        <end position="141"/>
    </location>
</feature>
<reference key="1">
    <citation type="journal article" date="2005" name="J. Bacteriol.">
        <title>Whole-genome sequence analysis of Pseudomonas syringae pv. phaseolicola 1448A reveals divergence among pathovars in genes involved in virulence and transposition.</title>
        <authorList>
            <person name="Joardar V."/>
            <person name="Lindeberg M."/>
            <person name="Jackson R.W."/>
            <person name="Selengut J."/>
            <person name="Dodson R."/>
            <person name="Brinkac L.M."/>
            <person name="Daugherty S.C."/>
            <person name="DeBoy R.T."/>
            <person name="Durkin A.S."/>
            <person name="Gwinn Giglio M."/>
            <person name="Madupu R."/>
            <person name="Nelson W.C."/>
            <person name="Rosovitz M.J."/>
            <person name="Sullivan S.A."/>
            <person name="Crabtree J."/>
            <person name="Creasy T."/>
            <person name="Davidsen T.M."/>
            <person name="Haft D.H."/>
            <person name="Zafar N."/>
            <person name="Zhou L."/>
            <person name="Halpin R."/>
            <person name="Holley T."/>
            <person name="Khouri H.M."/>
            <person name="Feldblyum T.V."/>
            <person name="White O."/>
            <person name="Fraser C.M."/>
            <person name="Chatterjee A.K."/>
            <person name="Cartinhour S."/>
            <person name="Schneider D."/>
            <person name="Mansfield J.W."/>
            <person name="Collmer A."/>
            <person name="Buell R."/>
        </authorList>
    </citation>
    <scope>NUCLEOTIDE SEQUENCE [LARGE SCALE GENOMIC DNA]</scope>
    <source>
        <strain>1448A / Race 6</strain>
    </source>
</reference>
<organism>
    <name type="scientific">Pseudomonas savastanoi pv. phaseolicola (strain 1448A / Race 6)</name>
    <name type="common">Pseudomonas syringae pv. phaseolicola (strain 1448A / Race 6)</name>
    <dbReference type="NCBI Taxonomy" id="264730"/>
    <lineage>
        <taxon>Bacteria</taxon>
        <taxon>Pseudomonadati</taxon>
        <taxon>Pseudomonadota</taxon>
        <taxon>Gammaproteobacteria</taxon>
        <taxon>Pseudomonadales</taxon>
        <taxon>Pseudomonadaceae</taxon>
        <taxon>Pseudomonas</taxon>
    </lineage>
</organism>
<accession>Q48NZ3</accession>
<gene>
    <name evidence="1" type="primary">rpsF</name>
    <name type="ordered locus">PSPPH_0576</name>
</gene>
<sequence length="141" mass="16343">MRHYEIIFLVHPDQSEQVGGMVERYTKLIEEDGGKIHRLEDWGRRQLAYAINNVHKAHYVMLNVECTGKALAELEDNFRYNDAVIRNLVIRRDEAVTGQSEMLKAEENRSERRERRDRPEHSDSADGDDGDNSDVSDNADE</sequence>
<proteinExistence type="inferred from homology"/>
<protein>
    <recommendedName>
        <fullName evidence="1">Small ribosomal subunit protein bS6</fullName>
    </recommendedName>
    <alternativeName>
        <fullName evidence="3">30S ribosomal protein S6</fullName>
    </alternativeName>
</protein>
<keyword id="KW-0687">Ribonucleoprotein</keyword>
<keyword id="KW-0689">Ribosomal protein</keyword>
<keyword id="KW-0694">RNA-binding</keyword>
<keyword id="KW-0699">rRNA-binding</keyword>